<gene>
    <name type="primary">rnhB</name>
    <name type="ordered locus">CCNA_00383</name>
</gene>
<name>RNH2_CAUVN</name>
<evidence type="ECO:0000250" key="1"/>
<evidence type="ECO:0000255" key="2">
    <source>
        <dbReference type="PROSITE-ProRule" id="PRU01319"/>
    </source>
</evidence>
<evidence type="ECO:0000305" key="3"/>
<protein>
    <recommendedName>
        <fullName>Ribonuclease HII</fullName>
        <shortName>RNase HII</shortName>
        <ecNumber>3.1.26.4</ecNumber>
    </recommendedName>
</protein>
<accession>B8GZ34</accession>
<accession>P52975</accession>
<reference key="1">
    <citation type="journal article" date="1995" name="J. Bacteriol.">
        <title>Coordinate cell cycle control of a Caulobacter DNA methyltransferase and the flagellar genetic hierarchy.</title>
        <authorList>
            <person name="Stephens C.M."/>
            <person name="Zweiger G."/>
            <person name="Shapiro L."/>
        </authorList>
    </citation>
    <scope>NUCLEOTIDE SEQUENCE [GENOMIC DNA]</scope>
</reference>
<reference key="2">
    <citation type="journal article" date="2010" name="J. Bacteriol.">
        <title>The genetic basis of laboratory adaptation in Caulobacter crescentus.</title>
        <authorList>
            <person name="Marks M.E."/>
            <person name="Castro-Rojas C.M."/>
            <person name="Teiling C."/>
            <person name="Du L."/>
            <person name="Kapatral V."/>
            <person name="Walunas T.L."/>
            <person name="Crosson S."/>
        </authorList>
    </citation>
    <scope>NUCLEOTIDE SEQUENCE [LARGE SCALE GENOMIC DNA]</scope>
    <source>
        <strain>NA1000 / CB15N</strain>
    </source>
</reference>
<organism>
    <name type="scientific">Caulobacter vibrioides (strain NA1000 / CB15N)</name>
    <name type="common">Caulobacter crescentus</name>
    <dbReference type="NCBI Taxonomy" id="565050"/>
    <lineage>
        <taxon>Bacteria</taxon>
        <taxon>Pseudomonadati</taxon>
        <taxon>Pseudomonadota</taxon>
        <taxon>Alphaproteobacteria</taxon>
        <taxon>Caulobacterales</taxon>
        <taxon>Caulobacteraceae</taxon>
        <taxon>Caulobacter</taxon>
    </lineage>
</organism>
<proteinExistence type="inferred from homology"/>
<feature type="chain" id="PRO_0000378307" description="Ribonuclease HII">
    <location>
        <begin position="1"/>
        <end position="211"/>
    </location>
</feature>
<feature type="domain" description="RNase H type-2" evidence="2">
    <location>
        <begin position="16"/>
        <end position="205"/>
    </location>
</feature>
<feature type="binding site" evidence="1">
    <location>
        <position position="22"/>
    </location>
    <ligand>
        <name>a divalent metal cation</name>
        <dbReference type="ChEBI" id="CHEBI:60240"/>
    </ligand>
</feature>
<feature type="binding site" evidence="1">
    <location>
        <position position="23"/>
    </location>
    <ligand>
        <name>a divalent metal cation</name>
        <dbReference type="ChEBI" id="CHEBI:60240"/>
    </ligand>
</feature>
<feature type="binding site" evidence="1">
    <location>
        <position position="114"/>
    </location>
    <ligand>
        <name>a divalent metal cation</name>
        <dbReference type="ChEBI" id="CHEBI:60240"/>
    </ligand>
</feature>
<feature type="sequence conflict" description="In Ref. 1." evidence="3" ref="1">
    <original>MPPGPDMTLELACGQAPVCGVDEA</original>
    <variation>MCVEKN</variation>
    <location>
        <begin position="1"/>
        <end position="24"/>
    </location>
</feature>
<feature type="sequence conflict" description="In Ref. 1." evidence="3" ref="1">
    <original>G</original>
    <variation>A</variation>
    <location>
        <position position="27"/>
    </location>
</feature>
<feature type="sequence conflict" description="In Ref. 1; AAB33869." evidence="3" ref="1">
    <location>
        <position position="164"/>
    </location>
</feature>
<feature type="sequence conflict" description="In Ref. 1; AAB33869." evidence="3" ref="1">
    <original>A</original>
    <variation>T</variation>
    <location>
        <position position="198"/>
    </location>
</feature>
<feature type="sequence conflict" description="In Ref. 1; AAB33869." evidence="3" ref="1">
    <original>A</original>
    <variation>S</variation>
    <location>
        <position position="201"/>
    </location>
</feature>
<feature type="sequence conflict" description="In Ref. 1; AAB33869." evidence="3" ref="1">
    <original>N</original>
    <variation>S</variation>
    <location>
        <position position="206"/>
    </location>
</feature>
<comment type="function">
    <text evidence="1">Endonuclease that specifically degrades the RNA of RNA-DNA hybrids.</text>
</comment>
<comment type="catalytic activity">
    <reaction>
        <text>Endonucleolytic cleavage to 5'-phosphomonoester.</text>
        <dbReference type="EC" id="3.1.26.4"/>
    </reaction>
</comment>
<comment type="cofactor">
    <cofactor evidence="1">
        <name>Mn(2+)</name>
        <dbReference type="ChEBI" id="CHEBI:29035"/>
    </cofactor>
    <cofactor evidence="1">
        <name>Mg(2+)</name>
        <dbReference type="ChEBI" id="CHEBI:18420"/>
    </cofactor>
    <text evidence="1">Manganese or magnesium. Binds 1 divalent metal ion per monomer in the absence of substrate. May bind a second metal ion after substrate binding.</text>
</comment>
<comment type="subcellular location">
    <subcellularLocation>
        <location evidence="3">Cytoplasm</location>
    </subcellularLocation>
</comment>
<comment type="similarity">
    <text evidence="3">Belongs to the RNase HII family.</text>
</comment>
<sequence>MPPGPDMTLELACGQAPVCGVDEAGRGPWAGPVSAGAVILDPDRIPKGLNDSKKLSAKARAALEEEIKDVAISWCVGLASIEEIAQLNILHAAGLAMRRAVEGLAVTPAFALVDGNYAFKLPCPVKTVIKGDSLSCSIAAASILAKEARDRIMIEADALYPGYGFAGHKGYHAKVHVEGLRRLGPSPIHRLGWAPVKAALAAAAVNGELDL</sequence>
<dbReference type="EC" id="3.1.26.4"/>
<dbReference type="EMBL" id="S76857">
    <property type="protein sequence ID" value="AAB33869.2"/>
    <property type="molecule type" value="Genomic_DNA"/>
</dbReference>
<dbReference type="EMBL" id="CP001340">
    <property type="protein sequence ID" value="ACL93850.1"/>
    <property type="molecule type" value="Genomic_DNA"/>
</dbReference>
<dbReference type="PIR" id="A56141">
    <property type="entry name" value="A56141"/>
</dbReference>
<dbReference type="RefSeq" id="WP_012639945.1">
    <property type="nucleotide sequence ID" value="NC_011916.1"/>
</dbReference>
<dbReference type="RefSeq" id="YP_002515758.1">
    <property type="nucleotide sequence ID" value="NC_011916.1"/>
</dbReference>
<dbReference type="SMR" id="B8GZ34"/>
<dbReference type="GeneID" id="7331082"/>
<dbReference type="KEGG" id="ccs:CCNA_00383"/>
<dbReference type="PATRIC" id="fig|565050.3.peg.382"/>
<dbReference type="HOGENOM" id="CLU_036532_3_2_5"/>
<dbReference type="OrthoDB" id="9803420at2"/>
<dbReference type="PhylomeDB" id="B8GZ34"/>
<dbReference type="Proteomes" id="UP000001364">
    <property type="component" value="Chromosome"/>
</dbReference>
<dbReference type="GO" id="GO:0005737">
    <property type="term" value="C:cytoplasm"/>
    <property type="evidence" value="ECO:0007669"/>
    <property type="project" value="UniProtKB-SubCell"/>
</dbReference>
<dbReference type="GO" id="GO:0032299">
    <property type="term" value="C:ribonuclease H2 complex"/>
    <property type="evidence" value="ECO:0007669"/>
    <property type="project" value="TreeGrafter"/>
</dbReference>
<dbReference type="GO" id="GO:0030145">
    <property type="term" value="F:manganese ion binding"/>
    <property type="evidence" value="ECO:0007669"/>
    <property type="project" value="UniProtKB-UniRule"/>
</dbReference>
<dbReference type="GO" id="GO:0003723">
    <property type="term" value="F:RNA binding"/>
    <property type="evidence" value="ECO:0007669"/>
    <property type="project" value="InterPro"/>
</dbReference>
<dbReference type="GO" id="GO:0004523">
    <property type="term" value="F:RNA-DNA hybrid ribonuclease activity"/>
    <property type="evidence" value="ECO:0007669"/>
    <property type="project" value="UniProtKB-UniRule"/>
</dbReference>
<dbReference type="GO" id="GO:0043137">
    <property type="term" value="P:DNA replication, removal of RNA primer"/>
    <property type="evidence" value="ECO:0007669"/>
    <property type="project" value="TreeGrafter"/>
</dbReference>
<dbReference type="GO" id="GO:0006298">
    <property type="term" value="P:mismatch repair"/>
    <property type="evidence" value="ECO:0007669"/>
    <property type="project" value="TreeGrafter"/>
</dbReference>
<dbReference type="CDD" id="cd07182">
    <property type="entry name" value="RNase_HII_bacteria_HII_like"/>
    <property type="match status" value="1"/>
</dbReference>
<dbReference type="Gene3D" id="3.30.420.10">
    <property type="entry name" value="Ribonuclease H-like superfamily/Ribonuclease H"/>
    <property type="match status" value="1"/>
</dbReference>
<dbReference type="HAMAP" id="MF_00052_B">
    <property type="entry name" value="RNase_HII_B"/>
    <property type="match status" value="1"/>
</dbReference>
<dbReference type="InterPro" id="IPR022898">
    <property type="entry name" value="RNase_HII"/>
</dbReference>
<dbReference type="InterPro" id="IPR001352">
    <property type="entry name" value="RNase_HII/HIII"/>
</dbReference>
<dbReference type="InterPro" id="IPR024567">
    <property type="entry name" value="RNase_HII/HIII_dom"/>
</dbReference>
<dbReference type="InterPro" id="IPR012337">
    <property type="entry name" value="RNaseH-like_sf"/>
</dbReference>
<dbReference type="InterPro" id="IPR036397">
    <property type="entry name" value="RNaseH_sf"/>
</dbReference>
<dbReference type="NCBIfam" id="NF000595">
    <property type="entry name" value="PRK00015.1-3"/>
    <property type="match status" value="1"/>
</dbReference>
<dbReference type="PANTHER" id="PTHR10954">
    <property type="entry name" value="RIBONUCLEASE H2 SUBUNIT A"/>
    <property type="match status" value="1"/>
</dbReference>
<dbReference type="PANTHER" id="PTHR10954:SF18">
    <property type="entry name" value="RIBONUCLEASE HII"/>
    <property type="match status" value="1"/>
</dbReference>
<dbReference type="Pfam" id="PF01351">
    <property type="entry name" value="RNase_HII"/>
    <property type="match status" value="1"/>
</dbReference>
<dbReference type="SUPFAM" id="SSF53098">
    <property type="entry name" value="Ribonuclease H-like"/>
    <property type="match status" value="1"/>
</dbReference>
<dbReference type="PROSITE" id="PS51975">
    <property type="entry name" value="RNASE_H_2"/>
    <property type="match status" value="1"/>
</dbReference>
<keyword id="KW-0963">Cytoplasm</keyword>
<keyword id="KW-0255">Endonuclease</keyword>
<keyword id="KW-0378">Hydrolase</keyword>
<keyword id="KW-0464">Manganese</keyword>
<keyword id="KW-0479">Metal-binding</keyword>
<keyword id="KW-0540">Nuclease</keyword>
<keyword id="KW-1185">Reference proteome</keyword>